<protein>
    <recommendedName>
        <fullName>Putative S-adenosyl-L-methionine-dependent methyltransferase MAP_4064c</fullName>
        <ecNumber>2.1.1.-</ecNumber>
    </recommendedName>
</protein>
<organism>
    <name type="scientific">Mycolicibacterium paratuberculosis (strain ATCC BAA-968 / K-10)</name>
    <name type="common">Mycobacterium paratuberculosis</name>
    <dbReference type="NCBI Taxonomy" id="262316"/>
    <lineage>
        <taxon>Bacteria</taxon>
        <taxon>Bacillati</taxon>
        <taxon>Actinomycetota</taxon>
        <taxon>Actinomycetes</taxon>
        <taxon>Mycobacteriales</taxon>
        <taxon>Mycobacteriaceae</taxon>
        <taxon>Mycobacterium</taxon>
        <taxon>Mycobacterium avium complex (MAC)</taxon>
    </lineage>
</organism>
<sequence length="313" mass="33336">MTVPNDDTWGPATSVGTTATMAAAARAIATRDGVINDPFAEPLVRAVGVNFLTRWAIGELVASDVDVEGSPWGLAQMPASIAARTRYFDEFYADAAAAGIRQAVILASGLDTRAYRLDWPAGMTVFEIDQPAVIEFKTTALARLGAEPKADLRTVAVDLRDDWSTALATAGLDSSKPTAWIAEGLFGYLAPEAQDGLLDAVTALSTPGSRLGSEAVPNTADMDPHAARERMRAATAKWRDHGFELDVDVISFAGERHDVGAYLQAHGWTTVATPMAELLADHGLPAIARADDDRQTMNGVTYYTSTLGTGRQR</sequence>
<evidence type="ECO:0000250" key="1"/>
<evidence type="ECO:0000305" key="2"/>
<proteinExistence type="inferred from homology"/>
<keyword id="KW-0489">Methyltransferase</keyword>
<keyword id="KW-1185">Reference proteome</keyword>
<keyword id="KW-0949">S-adenosyl-L-methionine</keyword>
<keyword id="KW-0808">Transferase</keyword>
<accession>Q73SK9</accession>
<dbReference type="EC" id="2.1.1.-"/>
<dbReference type="EMBL" id="AE016958">
    <property type="protein sequence ID" value="AAS06614.1"/>
    <property type="molecule type" value="Genomic_DNA"/>
</dbReference>
<dbReference type="RefSeq" id="WP_010950219.1">
    <property type="nucleotide sequence ID" value="NZ_CP106873.1"/>
</dbReference>
<dbReference type="SMR" id="Q73SK9"/>
<dbReference type="STRING" id="262316.MAP_4064c"/>
<dbReference type="KEGG" id="mpa:MAP_4064c"/>
<dbReference type="PATRIC" id="fig|262316.17.peg.4329"/>
<dbReference type="eggNOG" id="COG3315">
    <property type="taxonomic scope" value="Bacteria"/>
</dbReference>
<dbReference type="HOGENOM" id="CLU_056160_2_1_11"/>
<dbReference type="Proteomes" id="UP000000580">
    <property type="component" value="Chromosome"/>
</dbReference>
<dbReference type="GO" id="GO:0008168">
    <property type="term" value="F:methyltransferase activity"/>
    <property type="evidence" value="ECO:0007669"/>
    <property type="project" value="UniProtKB-KW"/>
</dbReference>
<dbReference type="GO" id="GO:0032259">
    <property type="term" value="P:methylation"/>
    <property type="evidence" value="ECO:0007669"/>
    <property type="project" value="UniProtKB-KW"/>
</dbReference>
<dbReference type="Gene3D" id="3.40.50.150">
    <property type="entry name" value="Vaccinia Virus protein VP39"/>
    <property type="match status" value="1"/>
</dbReference>
<dbReference type="InterPro" id="IPR007213">
    <property type="entry name" value="Ppm1/Ppm2/Tcmp"/>
</dbReference>
<dbReference type="InterPro" id="IPR029063">
    <property type="entry name" value="SAM-dependent_MTases_sf"/>
</dbReference>
<dbReference type="InterPro" id="IPR011610">
    <property type="entry name" value="SAM_mthyl_Trfase_ML2640-like"/>
</dbReference>
<dbReference type="NCBIfam" id="TIGR00027">
    <property type="entry name" value="mthyl_TIGR00027"/>
    <property type="match status" value="1"/>
</dbReference>
<dbReference type="PANTHER" id="PTHR43619">
    <property type="entry name" value="S-ADENOSYL-L-METHIONINE-DEPENDENT METHYLTRANSFERASE YKTD-RELATED"/>
    <property type="match status" value="1"/>
</dbReference>
<dbReference type="PANTHER" id="PTHR43619:SF2">
    <property type="entry name" value="S-ADENOSYL-L-METHIONINE-DEPENDENT METHYLTRANSFERASES SUPERFAMILY PROTEIN"/>
    <property type="match status" value="1"/>
</dbReference>
<dbReference type="Pfam" id="PF04072">
    <property type="entry name" value="LCM"/>
    <property type="match status" value="1"/>
</dbReference>
<dbReference type="SUPFAM" id="SSF53335">
    <property type="entry name" value="S-adenosyl-L-methionine-dependent methyltransferases"/>
    <property type="match status" value="1"/>
</dbReference>
<feature type="chain" id="PRO_0000361184" description="Putative S-adenosyl-L-methionine-dependent methyltransferase MAP_4064c">
    <location>
        <begin position="1"/>
        <end position="313"/>
    </location>
</feature>
<feature type="binding site" evidence="1">
    <location>
        <position position="129"/>
    </location>
    <ligand>
        <name>S-adenosyl-L-methionine</name>
        <dbReference type="ChEBI" id="CHEBI:59789"/>
    </ligand>
</feature>
<feature type="binding site" evidence="1">
    <location>
        <begin position="158"/>
        <end position="159"/>
    </location>
    <ligand>
        <name>S-adenosyl-L-methionine</name>
        <dbReference type="ChEBI" id="CHEBI:59789"/>
    </ligand>
</feature>
<reference key="1">
    <citation type="journal article" date="2005" name="Proc. Natl. Acad. Sci. U.S.A.">
        <title>The complete genome sequence of Mycobacterium avium subspecies paratuberculosis.</title>
        <authorList>
            <person name="Li L."/>
            <person name="Bannantine J.P."/>
            <person name="Zhang Q."/>
            <person name="Amonsin A."/>
            <person name="May B.J."/>
            <person name="Alt D."/>
            <person name="Banerji N."/>
            <person name="Kanjilal S."/>
            <person name="Kapur V."/>
        </authorList>
    </citation>
    <scope>NUCLEOTIDE SEQUENCE [LARGE SCALE GENOMIC DNA]</scope>
    <source>
        <strain>ATCC BAA-968 / K-10</strain>
    </source>
</reference>
<name>Y4064_MYCPA</name>
<gene>
    <name type="ordered locus">MAP_4064c</name>
</gene>
<comment type="function">
    <text evidence="1">Exhibits S-adenosyl-L-methionine-dependent methyltransferase activity.</text>
</comment>
<comment type="similarity">
    <text evidence="2">Belongs to the UPF0677 family.</text>
</comment>